<evidence type="ECO:0000255" key="1">
    <source>
        <dbReference type="HAMAP-Rule" id="MF_00412"/>
    </source>
</evidence>
<evidence type="ECO:0007744" key="2">
    <source>
    </source>
</evidence>
<organism>
    <name type="scientific">Mycobacterium tuberculosis (strain ATCC 25618 / H37Rv)</name>
    <dbReference type="NCBI Taxonomy" id="83332"/>
    <lineage>
        <taxon>Bacteria</taxon>
        <taxon>Bacillati</taxon>
        <taxon>Actinomycetota</taxon>
        <taxon>Actinomycetes</taxon>
        <taxon>Mycobacteriales</taxon>
        <taxon>Mycobacteriaceae</taxon>
        <taxon>Mycobacterium</taxon>
        <taxon>Mycobacterium tuberculosis complex</taxon>
    </lineage>
</organism>
<feature type="initiator methionine" description="Removed" evidence="2">
    <location>
        <position position="1"/>
    </location>
</feature>
<feature type="chain" id="PRO_0000189753" description="Gamma-glutamyl phosphate reductase">
    <location>
        <begin position="2"/>
        <end position="415"/>
    </location>
</feature>
<feature type="modified residue" description="N-acetylthreonine" evidence="2">
    <location>
        <position position="2"/>
    </location>
</feature>
<sequence>MTVPAPSQLDLRQEVHDAARRARVAARRLASLPTTVKDRALHAAADELLAHRDQILAANAEDLNAAREADTPAAMLDRLSLNPQRVDGIAAGLRQVAGLRDPVGEVLRGYTLPNGLQLRQQRVPLGVVGMIYEGRPNVTVDAFGLTLKSGNAALLRGSSSAAKSNEALVAVLRTALVGLELPADAVQLLSAADRATVTHLIQARGLVDVVIPRGGAGLIEAVVRDAQVPTIETGVGNCHVYVHQAADLDVAERILLNSKTRRPSVCNAAETLLVDAAIAETALPRLLAALQHAGVTVHLDPDEADLRREYLSLDIAVAVVDGVDAAIAHINEYGTGHTEAIVTTNLDAAQRFTEQIDAAAVMVNASTAFTDGEQFGFGAEIGISTQKLHARGPMGLPELTSTKWIAWGAGHTRPA</sequence>
<name>PROA_MYCTU</name>
<reference key="1">
    <citation type="journal article" date="1998" name="Nature">
        <title>Deciphering the biology of Mycobacterium tuberculosis from the complete genome sequence.</title>
        <authorList>
            <person name="Cole S.T."/>
            <person name="Brosch R."/>
            <person name="Parkhill J."/>
            <person name="Garnier T."/>
            <person name="Churcher C.M."/>
            <person name="Harris D.E."/>
            <person name="Gordon S.V."/>
            <person name="Eiglmeier K."/>
            <person name="Gas S."/>
            <person name="Barry C.E. III"/>
            <person name="Tekaia F."/>
            <person name="Badcock K."/>
            <person name="Basham D."/>
            <person name="Brown D."/>
            <person name="Chillingworth T."/>
            <person name="Connor R."/>
            <person name="Davies R.M."/>
            <person name="Devlin K."/>
            <person name="Feltwell T."/>
            <person name="Gentles S."/>
            <person name="Hamlin N."/>
            <person name="Holroyd S."/>
            <person name="Hornsby T."/>
            <person name="Jagels K."/>
            <person name="Krogh A."/>
            <person name="McLean J."/>
            <person name="Moule S."/>
            <person name="Murphy L.D."/>
            <person name="Oliver S."/>
            <person name="Osborne J."/>
            <person name="Quail M.A."/>
            <person name="Rajandream M.A."/>
            <person name="Rogers J."/>
            <person name="Rutter S."/>
            <person name="Seeger K."/>
            <person name="Skelton S."/>
            <person name="Squares S."/>
            <person name="Squares R."/>
            <person name="Sulston J.E."/>
            <person name="Taylor K."/>
            <person name="Whitehead S."/>
            <person name="Barrell B.G."/>
        </authorList>
    </citation>
    <scope>NUCLEOTIDE SEQUENCE [LARGE SCALE GENOMIC DNA]</scope>
    <source>
        <strain>ATCC 25618 / H37Rv</strain>
    </source>
</reference>
<reference key="2">
    <citation type="journal article" date="2011" name="Mol. Cell. Proteomics">
        <title>Proteogenomic analysis of Mycobacterium tuberculosis by high resolution mass spectrometry.</title>
        <authorList>
            <person name="Kelkar D.S."/>
            <person name="Kumar D."/>
            <person name="Kumar P."/>
            <person name="Balakrishnan L."/>
            <person name="Muthusamy B."/>
            <person name="Yadav A.K."/>
            <person name="Shrivastava P."/>
            <person name="Marimuthu A."/>
            <person name="Anand S."/>
            <person name="Sundaram H."/>
            <person name="Kingsbury R."/>
            <person name="Harsha H.C."/>
            <person name="Nair B."/>
            <person name="Prasad T.S."/>
            <person name="Chauhan D.S."/>
            <person name="Katoch K."/>
            <person name="Katoch V.M."/>
            <person name="Kumar P."/>
            <person name="Chaerkady R."/>
            <person name="Ramachandran S."/>
            <person name="Dash D."/>
            <person name="Pandey A."/>
        </authorList>
    </citation>
    <scope>ACETYLATION [LARGE SCALE ANALYSIS] AT THR-2</scope>
    <scope>CLEAVAGE OF INITIATOR METHIONINE [LARGE SCALE ANALYSIS]</scope>
    <scope>IDENTIFICATION BY MASS SPECTROMETRY [LARGE SCALE ANALYSIS]</scope>
    <source>
        <strain>ATCC 25618 / H37Rv</strain>
    </source>
</reference>
<keyword id="KW-0007">Acetylation</keyword>
<keyword id="KW-0028">Amino-acid biosynthesis</keyword>
<keyword id="KW-0963">Cytoplasm</keyword>
<keyword id="KW-0521">NADP</keyword>
<keyword id="KW-0560">Oxidoreductase</keyword>
<keyword id="KW-0641">Proline biosynthesis</keyword>
<keyword id="KW-1185">Reference proteome</keyword>
<comment type="function">
    <text evidence="1">Catalyzes the NADPH-dependent reduction of L-glutamate 5-phosphate into L-glutamate 5-semialdehyde and phosphate. The product spontaneously undergoes cyclization to form 1-pyrroline-5-carboxylate.</text>
</comment>
<comment type="catalytic activity">
    <reaction evidence="1">
        <text>L-glutamate 5-semialdehyde + phosphate + NADP(+) = L-glutamyl 5-phosphate + NADPH + H(+)</text>
        <dbReference type="Rhea" id="RHEA:19541"/>
        <dbReference type="ChEBI" id="CHEBI:15378"/>
        <dbReference type="ChEBI" id="CHEBI:43474"/>
        <dbReference type="ChEBI" id="CHEBI:57783"/>
        <dbReference type="ChEBI" id="CHEBI:58066"/>
        <dbReference type="ChEBI" id="CHEBI:58274"/>
        <dbReference type="ChEBI" id="CHEBI:58349"/>
        <dbReference type="EC" id="1.2.1.41"/>
    </reaction>
</comment>
<comment type="pathway">
    <text evidence="1">Amino-acid biosynthesis; L-proline biosynthesis; L-glutamate 5-semialdehyde from L-glutamate: step 2/2.</text>
</comment>
<comment type="subcellular location">
    <subcellularLocation>
        <location evidence="1">Cytoplasm</location>
    </subcellularLocation>
</comment>
<comment type="similarity">
    <text evidence="1">Belongs to the gamma-glutamyl phosphate reductase family.</text>
</comment>
<accession>P9WHV1</accession>
<accession>L0TB68</accession>
<accession>P65788</accession>
<accession>P71921</accession>
<protein>
    <recommendedName>
        <fullName evidence="1">Gamma-glutamyl phosphate reductase</fullName>
        <shortName evidence="1">GPR</shortName>
        <ecNumber evidence="1">1.2.1.41</ecNumber>
    </recommendedName>
    <alternativeName>
        <fullName evidence="1">Glutamate-5-semialdehyde dehydrogenase</fullName>
    </alternativeName>
    <alternativeName>
        <fullName evidence="1">Glutamyl-gamma-semialdehyde dehydrogenase</fullName>
        <shortName evidence="1">GSA dehydrogenase</shortName>
    </alternativeName>
</protein>
<proteinExistence type="evidence at protein level"/>
<gene>
    <name evidence="1" type="primary">proA</name>
    <name type="ordered locus">Rv2427c</name>
    <name type="ORF">MTCY428.20</name>
</gene>
<dbReference type="EC" id="1.2.1.41" evidence="1"/>
<dbReference type="EMBL" id="AL123456">
    <property type="protein sequence ID" value="CCP45218.1"/>
    <property type="molecule type" value="Genomic_DNA"/>
</dbReference>
<dbReference type="PIR" id="A70679">
    <property type="entry name" value="A70679"/>
</dbReference>
<dbReference type="RefSeq" id="NP_216943.1">
    <property type="nucleotide sequence ID" value="NC_000962.3"/>
</dbReference>
<dbReference type="RefSeq" id="WP_003412516.1">
    <property type="nucleotide sequence ID" value="NZ_NVQJ01000024.1"/>
</dbReference>
<dbReference type="SMR" id="P9WHV1"/>
<dbReference type="FunCoup" id="P9WHV1">
    <property type="interactions" value="385"/>
</dbReference>
<dbReference type="IntAct" id="P9WHV1">
    <property type="interactions" value="4"/>
</dbReference>
<dbReference type="MINT" id="P9WHV1"/>
<dbReference type="STRING" id="83332.Rv2427c"/>
<dbReference type="iPTMnet" id="P9WHV1"/>
<dbReference type="PaxDb" id="83332-Rv2427c"/>
<dbReference type="DNASU" id="885536"/>
<dbReference type="GeneID" id="885536"/>
<dbReference type="KEGG" id="mtu:Rv2427c"/>
<dbReference type="KEGG" id="mtv:RVBD_2427c"/>
<dbReference type="TubercuList" id="Rv2427c"/>
<dbReference type="eggNOG" id="COG0014">
    <property type="taxonomic scope" value="Bacteria"/>
</dbReference>
<dbReference type="InParanoid" id="P9WHV1"/>
<dbReference type="OrthoDB" id="9809970at2"/>
<dbReference type="PhylomeDB" id="P9WHV1"/>
<dbReference type="UniPathway" id="UPA00098">
    <property type="reaction ID" value="UER00360"/>
</dbReference>
<dbReference type="Proteomes" id="UP000001584">
    <property type="component" value="Chromosome"/>
</dbReference>
<dbReference type="GO" id="GO:0005829">
    <property type="term" value="C:cytosol"/>
    <property type="evidence" value="ECO:0007005"/>
    <property type="project" value="MTBBASE"/>
</dbReference>
<dbReference type="GO" id="GO:0005886">
    <property type="term" value="C:plasma membrane"/>
    <property type="evidence" value="ECO:0007005"/>
    <property type="project" value="MTBBASE"/>
</dbReference>
<dbReference type="GO" id="GO:0004350">
    <property type="term" value="F:glutamate-5-semialdehyde dehydrogenase activity"/>
    <property type="evidence" value="ECO:0000318"/>
    <property type="project" value="GO_Central"/>
</dbReference>
<dbReference type="GO" id="GO:0050661">
    <property type="term" value="F:NADP binding"/>
    <property type="evidence" value="ECO:0007669"/>
    <property type="project" value="InterPro"/>
</dbReference>
<dbReference type="GO" id="GO:0055129">
    <property type="term" value="P:L-proline biosynthetic process"/>
    <property type="evidence" value="ECO:0007669"/>
    <property type="project" value="UniProtKB-UniRule"/>
</dbReference>
<dbReference type="CDD" id="cd07079">
    <property type="entry name" value="ALDH_F18-19_ProA-GPR"/>
    <property type="match status" value="1"/>
</dbReference>
<dbReference type="FunFam" id="3.40.309.10:FF:000006">
    <property type="entry name" value="Gamma-glutamyl phosphate reductase"/>
    <property type="match status" value="1"/>
</dbReference>
<dbReference type="Gene3D" id="3.40.605.10">
    <property type="entry name" value="Aldehyde Dehydrogenase, Chain A, domain 1"/>
    <property type="match status" value="1"/>
</dbReference>
<dbReference type="Gene3D" id="3.40.309.10">
    <property type="entry name" value="Aldehyde Dehydrogenase, Chain A, domain 2"/>
    <property type="match status" value="1"/>
</dbReference>
<dbReference type="HAMAP" id="MF_00412">
    <property type="entry name" value="ProA"/>
    <property type="match status" value="1"/>
</dbReference>
<dbReference type="InterPro" id="IPR016161">
    <property type="entry name" value="Ald_DH/histidinol_DH"/>
</dbReference>
<dbReference type="InterPro" id="IPR016163">
    <property type="entry name" value="Ald_DH_C"/>
</dbReference>
<dbReference type="InterPro" id="IPR016162">
    <property type="entry name" value="Ald_DH_N"/>
</dbReference>
<dbReference type="InterPro" id="IPR015590">
    <property type="entry name" value="Aldehyde_DH_dom"/>
</dbReference>
<dbReference type="InterPro" id="IPR020593">
    <property type="entry name" value="G-glutamylP_reductase_CS"/>
</dbReference>
<dbReference type="InterPro" id="IPR012134">
    <property type="entry name" value="Glu-5-SA_DH"/>
</dbReference>
<dbReference type="InterPro" id="IPR000965">
    <property type="entry name" value="GPR_dom"/>
</dbReference>
<dbReference type="NCBIfam" id="NF001221">
    <property type="entry name" value="PRK00197.1"/>
    <property type="match status" value="1"/>
</dbReference>
<dbReference type="NCBIfam" id="TIGR00407">
    <property type="entry name" value="proA"/>
    <property type="match status" value="1"/>
</dbReference>
<dbReference type="PANTHER" id="PTHR11063:SF8">
    <property type="entry name" value="DELTA-1-PYRROLINE-5-CARBOXYLATE SYNTHASE"/>
    <property type="match status" value="1"/>
</dbReference>
<dbReference type="PANTHER" id="PTHR11063">
    <property type="entry name" value="GLUTAMATE SEMIALDEHYDE DEHYDROGENASE"/>
    <property type="match status" value="1"/>
</dbReference>
<dbReference type="Pfam" id="PF00171">
    <property type="entry name" value="Aldedh"/>
    <property type="match status" value="2"/>
</dbReference>
<dbReference type="PIRSF" id="PIRSF000151">
    <property type="entry name" value="GPR"/>
    <property type="match status" value="1"/>
</dbReference>
<dbReference type="SUPFAM" id="SSF53720">
    <property type="entry name" value="ALDH-like"/>
    <property type="match status" value="1"/>
</dbReference>
<dbReference type="PROSITE" id="PS01223">
    <property type="entry name" value="PROA"/>
    <property type="match status" value="1"/>
</dbReference>